<proteinExistence type="inferred from homology"/>
<feature type="chain" id="PRO_0000195970" description="Histone H1E">
    <location>
        <begin position="1"/>
        <end position="237"/>
    </location>
</feature>
<feature type="domain" description="H15" evidence="1">
    <location>
        <begin position="50"/>
        <end position="124"/>
    </location>
</feature>
<feature type="region of interest" description="Disordered" evidence="2">
    <location>
        <begin position="1"/>
        <end position="56"/>
    </location>
</feature>
<feature type="region of interest" description="Disordered" evidence="2">
    <location>
        <begin position="109"/>
        <end position="237"/>
    </location>
</feature>
<feature type="compositionally biased region" description="Low complexity" evidence="2">
    <location>
        <begin position="1"/>
        <end position="21"/>
    </location>
</feature>
<feature type="compositionally biased region" description="Basic and acidic residues" evidence="2">
    <location>
        <begin position="26"/>
        <end position="42"/>
    </location>
</feature>
<feature type="compositionally biased region" description="Low complexity" evidence="2">
    <location>
        <begin position="182"/>
        <end position="195"/>
    </location>
</feature>
<feature type="compositionally biased region" description="Basic and acidic residues" evidence="2">
    <location>
        <begin position="200"/>
        <end position="209"/>
    </location>
</feature>
<feature type="compositionally biased region" description="Basic residues" evidence="2">
    <location>
        <begin position="210"/>
        <end position="237"/>
    </location>
</feature>
<comment type="function">
    <text>Histones H1 are necessary for the condensation of nucleosome chains into higher-order structures.</text>
</comment>
<comment type="subcellular location">
    <subcellularLocation>
        <location>Nucleus</location>
    </subcellularLocation>
    <subcellularLocation>
        <location>Chromosome</location>
    </subcellularLocation>
</comment>
<comment type="similarity">
    <text evidence="1">Belongs to the histone H1/H5 family.</text>
</comment>
<protein>
    <recommendedName>
        <fullName>Histone H1E</fullName>
    </recommendedName>
</protein>
<dbReference type="EMBL" id="L29105">
    <property type="protein sequence ID" value="AAB53945.1"/>
    <property type="molecule type" value="Genomic_DNA"/>
</dbReference>
<dbReference type="SMR" id="P40278"/>
<dbReference type="GO" id="GO:0000786">
    <property type="term" value="C:nucleosome"/>
    <property type="evidence" value="ECO:0007669"/>
    <property type="project" value="InterPro"/>
</dbReference>
<dbReference type="GO" id="GO:0005634">
    <property type="term" value="C:nucleus"/>
    <property type="evidence" value="ECO:0007669"/>
    <property type="project" value="UniProtKB-SubCell"/>
</dbReference>
<dbReference type="GO" id="GO:0003690">
    <property type="term" value="F:double-stranded DNA binding"/>
    <property type="evidence" value="ECO:0007669"/>
    <property type="project" value="TreeGrafter"/>
</dbReference>
<dbReference type="GO" id="GO:0031492">
    <property type="term" value="F:nucleosomal DNA binding"/>
    <property type="evidence" value="ECO:0007669"/>
    <property type="project" value="TreeGrafter"/>
</dbReference>
<dbReference type="GO" id="GO:0030527">
    <property type="term" value="F:structural constituent of chromatin"/>
    <property type="evidence" value="ECO:0007669"/>
    <property type="project" value="InterPro"/>
</dbReference>
<dbReference type="GO" id="GO:0030261">
    <property type="term" value="P:chromosome condensation"/>
    <property type="evidence" value="ECO:0007669"/>
    <property type="project" value="TreeGrafter"/>
</dbReference>
<dbReference type="GO" id="GO:0045910">
    <property type="term" value="P:negative regulation of DNA recombination"/>
    <property type="evidence" value="ECO:0007669"/>
    <property type="project" value="TreeGrafter"/>
</dbReference>
<dbReference type="GO" id="GO:0006334">
    <property type="term" value="P:nucleosome assembly"/>
    <property type="evidence" value="ECO:0007669"/>
    <property type="project" value="InterPro"/>
</dbReference>
<dbReference type="CDD" id="cd00073">
    <property type="entry name" value="H15"/>
    <property type="match status" value="1"/>
</dbReference>
<dbReference type="FunFam" id="1.10.10.10:FF:000140">
    <property type="entry name" value="Histone H1.0"/>
    <property type="match status" value="1"/>
</dbReference>
<dbReference type="Gene3D" id="1.10.10.10">
    <property type="entry name" value="Winged helix-like DNA-binding domain superfamily/Winged helix DNA-binding domain"/>
    <property type="match status" value="1"/>
</dbReference>
<dbReference type="InterPro" id="IPR005819">
    <property type="entry name" value="H1/H5"/>
</dbReference>
<dbReference type="InterPro" id="IPR005818">
    <property type="entry name" value="Histone_H1/H5_H15"/>
</dbReference>
<dbReference type="InterPro" id="IPR036388">
    <property type="entry name" value="WH-like_DNA-bd_sf"/>
</dbReference>
<dbReference type="InterPro" id="IPR036390">
    <property type="entry name" value="WH_DNA-bd_sf"/>
</dbReference>
<dbReference type="PANTHER" id="PTHR11467:SF20">
    <property type="entry name" value="H15 DOMAIN-CONTAINING PROTEIN-RELATED"/>
    <property type="match status" value="1"/>
</dbReference>
<dbReference type="PANTHER" id="PTHR11467">
    <property type="entry name" value="HISTONE H1"/>
    <property type="match status" value="1"/>
</dbReference>
<dbReference type="Pfam" id="PF00538">
    <property type="entry name" value="Linker_histone"/>
    <property type="match status" value="1"/>
</dbReference>
<dbReference type="PRINTS" id="PR00624">
    <property type="entry name" value="HISTONEH5"/>
</dbReference>
<dbReference type="SMART" id="SM00526">
    <property type="entry name" value="H15"/>
    <property type="match status" value="1"/>
</dbReference>
<dbReference type="SUPFAM" id="SSF46785">
    <property type="entry name" value="Winged helix' DNA-binding domain"/>
    <property type="match status" value="1"/>
</dbReference>
<dbReference type="PROSITE" id="PS51504">
    <property type="entry name" value="H15"/>
    <property type="match status" value="1"/>
</dbReference>
<evidence type="ECO:0000255" key="1">
    <source>
        <dbReference type="PROSITE-ProRule" id="PRU00837"/>
    </source>
</evidence>
<evidence type="ECO:0000256" key="2">
    <source>
        <dbReference type="SAM" id="MobiDB-lite"/>
    </source>
</evidence>
<accession>P40278</accession>
<organism>
    <name type="scientific">Chironomus tentans</name>
    <name type="common">Midge</name>
    <name type="synonym">Camptochironomus tentans</name>
    <dbReference type="NCBI Taxonomy" id="7153"/>
    <lineage>
        <taxon>Eukaryota</taxon>
        <taxon>Metazoa</taxon>
        <taxon>Ecdysozoa</taxon>
        <taxon>Arthropoda</taxon>
        <taxon>Hexapoda</taxon>
        <taxon>Insecta</taxon>
        <taxon>Pterygota</taxon>
        <taxon>Neoptera</taxon>
        <taxon>Endopterygota</taxon>
        <taxon>Diptera</taxon>
        <taxon>Nematocera</taxon>
        <taxon>Chironomoidea</taxon>
        <taxon>Chironomidae</taxon>
        <taxon>Chironominae</taxon>
        <taxon>Chironomus</taxon>
    </lineage>
</organism>
<reference key="1">
    <citation type="submission" date="1994-03" db="EMBL/GenBank/DDBJ databases">
        <title>The two classes of histone H1 proteins of the dipteran genus Camptochironomus are encoded by organizationally divergent genes and differ by a DNA binding motif, KAPKAP.</title>
        <authorList>
            <person name="Schulze E."/>
            <person name="Wisniewski J.R."/>
            <person name="Nagel S."/>
            <person name="Gavenis K."/>
            <person name="Grossbach U."/>
        </authorList>
    </citation>
    <scope>NUCLEOTIDE SEQUENCE [GENOMIC DNA]</scope>
</reference>
<name>H1E_CHITE</name>
<sequence>MSDPAQEVEAPVEAAPVASSPKGKKEKAPKAPKAEKPKSDKPKKPKAAPTHPPVSEMVVNAITTLKERGGSSLIAIKKFVAAQYKVDVEKLVPFIKKFLKASVAKGTLLQAKGKGASGSFKLPPAAKKVDKPKKAPATPKPKSTKPKRVTGEKKVVKKPAAKKPEAKKATKAAKPAAKKVAAKPAAKKAAAPKPKAAAKPKKEVKPKKEAKPKKAAAKPAKKPAAKPAKKPAAKKAK</sequence>
<keyword id="KW-0158">Chromosome</keyword>
<keyword id="KW-0238">DNA-binding</keyword>
<keyword id="KW-0539">Nucleus</keyword>